<proteinExistence type="evidence at transcript level"/>
<dbReference type="EMBL" id="AB039926">
    <property type="protein sequence ID" value="BAB63913.1"/>
    <property type="molecule type" value="mRNA"/>
</dbReference>
<dbReference type="EMBL" id="AF083738">
    <property type="protein sequence ID" value="AAN60296.1"/>
    <property type="molecule type" value="mRNA"/>
</dbReference>
<dbReference type="EMBL" id="AL078467">
    <property type="protein sequence ID" value="CAB43873.1"/>
    <property type="status" value="ALT_SEQ"/>
    <property type="molecule type" value="Genomic_DNA"/>
</dbReference>
<dbReference type="EMBL" id="AL161571">
    <property type="protein sequence ID" value="CAB81391.1"/>
    <property type="status" value="ALT_SEQ"/>
    <property type="molecule type" value="Genomic_DNA"/>
</dbReference>
<dbReference type="EMBL" id="CP002687">
    <property type="protein sequence ID" value="AEE85334.1"/>
    <property type="molecule type" value="Genomic_DNA"/>
</dbReference>
<dbReference type="EMBL" id="AY057578">
    <property type="protein sequence ID" value="AAL09817.1"/>
    <property type="molecule type" value="mRNA"/>
</dbReference>
<dbReference type="EMBL" id="AF428375">
    <property type="protein sequence ID" value="AAL16305.1"/>
    <property type="molecule type" value="mRNA"/>
</dbReference>
<dbReference type="EMBL" id="AY091428">
    <property type="protein sequence ID" value="AAM14367.1"/>
    <property type="molecule type" value="mRNA"/>
</dbReference>
<dbReference type="EMBL" id="BT000790">
    <property type="protein sequence ID" value="AAN31929.1"/>
    <property type="molecule type" value="mRNA"/>
</dbReference>
<dbReference type="EMBL" id="AY087772">
    <property type="protein sequence ID" value="AAM65308.1"/>
    <property type="molecule type" value="mRNA"/>
</dbReference>
<dbReference type="PIR" id="T08933">
    <property type="entry name" value="T08933"/>
</dbReference>
<dbReference type="RefSeq" id="NP_001078452.1">
    <property type="nucleotide sequence ID" value="NM_001084983.1"/>
</dbReference>
<dbReference type="RefSeq" id="NP_567773.1">
    <molecule id="Q93VY3-1"/>
    <property type="nucleotide sequence ID" value="NM_118875.4"/>
</dbReference>
<dbReference type="SMR" id="Q93VY3"/>
<dbReference type="BioGRID" id="14136">
    <property type="interactions" value="12"/>
</dbReference>
<dbReference type="FunCoup" id="Q93VY3">
    <property type="interactions" value="14"/>
</dbReference>
<dbReference type="IntAct" id="Q93VY3">
    <property type="interactions" value="4"/>
</dbReference>
<dbReference type="STRING" id="3702.Q93VY3"/>
<dbReference type="GlyGen" id="Q93VY3">
    <property type="glycosylation" value="1 site"/>
</dbReference>
<dbReference type="PaxDb" id="3702-AT4G27410.3"/>
<dbReference type="EnsemblPlants" id="AT4G27410.2">
    <molecule id="Q93VY3-1"/>
    <property type="protein sequence ID" value="AT4G27410.2"/>
    <property type="gene ID" value="AT4G27410"/>
</dbReference>
<dbReference type="GeneID" id="828849"/>
<dbReference type="Gramene" id="AT4G27410.2">
    <molecule id="Q93VY3-1"/>
    <property type="protein sequence ID" value="AT4G27410.2"/>
    <property type="gene ID" value="AT4G27410"/>
</dbReference>
<dbReference type="KEGG" id="ath:AT4G27410"/>
<dbReference type="Araport" id="AT4G27410"/>
<dbReference type="TAIR" id="AT4G27410">
    <property type="gene designation" value="RD26"/>
</dbReference>
<dbReference type="eggNOG" id="ENOG502QRBC">
    <property type="taxonomic scope" value="Eukaryota"/>
</dbReference>
<dbReference type="HOGENOM" id="CLU_035664_8_4_1"/>
<dbReference type="InParanoid" id="Q93VY3"/>
<dbReference type="OrthoDB" id="1921961at2759"/>
<dbReference type="PhylomeDB" id="Q93VY3"/>
<dbReference type="PRO" id="PR:Q93VY3"/>
<dbReference type="Proteomes" id="UP000006548">
    <property type="component" value="Chromosome 4"/>
</dbReference>
<dbReference type="ExpressionAtlas" id="Q93VY3">
    <property type="expression patterns" value="baseline and differential"/>
</dbReference>
<dbReference type="GO" id="GO:0005634">
    <property type="term" value="C:nucleus"/>
    <property type="evidence" value="ECO:0000314"/>
    <property type="project" value="UniProtKB"/>
</dbReference>
<dbReference type="GO" id="GO:1990841">
    <property type="term" value="F:promoter-specific chromatin binding"/>
    <property type="evidence" value="ECO:0000314"/>
    <property type="project" value="UniProtKB"/>
</dbReference>
<dbReference type="GO" id="GO:0043565">
    <property type="term" value="F:sequence-specific DNA binding"/>
    <property type="evidence" value="ECO:0000314"/>
    <property type="project" value="UniProtKB"/>
</dbReference>
<dbReference type="GO" id="GO:0006355">
    <property type="term" value="P:regulation of DNA-templated transcription"/>
    <property type="evidence" value="ECO:0000315"/>
    <property type="project" value="UniProtKB"/>
</dbReference>
<dbReference type="GO" id="GO:1900055">
    <property type="term" value="P:regulation of leaf senescence"/>
    <property type="evidence" value="ECO:0000315"/>
    <property type="project" value="UniProtKB"/>
</dbReference>
<dbReference type="FunFam" id="2.170.150.80:FF:000008">
    <property type="entry name" value="NAC domain-containing protein 72-like"/>
    <property type="match status" value="1"/>
</dbReference>
<dbReference type="Gene3D" id="2.170.150.80">
    <property type="entry name" value="NAC domain"/>
    <property type="match status" value="1"/>
</dbReference>
<dbReference type="InterPro" id="IPR003441">
    <property type="entry name" value="NAC-dom"/>
</dbReference>
<dbReference type="InterPro" id="IPR036093">
    <property type="entry name" value="NAC_dom_sf"/>
</dbReference>
<dbReference type="PANTHER" id="PTHR31744:SF233">
    <property type="entry name" value="NAC DOMAIN-CONTAINING PROTEIN 72-LIKE"/>
    <property type="match status" value="1"/>
</dbReference>
<dbReference type="PANTHER" id="PTHR31744">
    <property type="entry name" value="PROTEIN CUP-SHAPED COTYLEDON 2-RELATED"/>
    <property type="match status" value="1"/>
</dbReference>
<dbReference type="Pfam" id="PF02365">
    <property type="entry name" value="NAM"/>
    <property type="match status" value="1"/>
</dbReference>
<dbReference type="SUPFAM" id="SSF101941">
    <property type="entry name" value="NAC domain"/>
    <property type="match status" value="1"/>
</dbReference>
<dbReference type="PROSITE" id="PS51005">
    <property type="entry name" value="NAC"/>
    <property type="match status" value="1"/>
</dbReference>
<organism>
    <name type="scientific">Arabidopsis thaliana</name>
    <name type="common">Mouse-ear cress</name>
    <dbReference type="NCBI Taxonomy" id="3702"/>
    <lineage>
        <taxon>Eukaryota</taxon>
        <taxon>Viridiplantae</taxon>
        <taxon>Streptophyta</taxon>
        <taxon>Embryophyta</taxon>
        <taxon>Tracheophyta</taxon>
        <taxon>Spermatophyta</taxon>
        <taxon>Magnoliopsida</taxon>
        <taxon>eudicotyledons</taxon>
        <taxon>Gunneridae</taxon>
        <taxon>Pentapetalae</taxon>
        <taxon>rosids</taxon>
        <taxon>malvids</taxon>
        <taxon>Brassicales</taxon>
        <taxon>Brassicaceae</taxon>
        <taxon>Camelineae</taxon>
        <taxon>Arabidopsis</taxon>
    </lineage>
</organism>
<gene>
    <name evidence="7" type="primary">NAC072</name>
    <name evidence="8" type="synonym">RD26</name>
    <name evidence="11" type="ordered locus">At4g27410</name>
    <name evidence="12" type="ORF">F27G19.10</name>
</gene>
<reference key="1">
    <citation type="submission" date="2000-03" db="EMBL/GenBank/DDBJ databases">
        <authorList>
            <person name="Shinozaki K."/>
            <person name="Yamaguchi-shinozaki K."/>
            <person name="Takahashi S."/>
        </authorList>
    </citation>
    <scope>NUCLEOTIDE SEQUENCE [MRNA] (ISOFORM 2)</scope>
</reference>
<reference key="2">
    <citation type="submission" date="1998-08" db="EMBL/GenBank/DDBJ databases">
        <title>Signal peptide selection derived cDNAs from Arabidopsis thaliana leaves and guard cells.</title>
        <authorList>
            <person name="Stracke R."/>
            <person name="Palme K."/>
        </authorList>
    </citation>
    <scope>NUCLEOTIDE SEQUENCE [LARGE SCALE MRNA] (ISOFORM 1)</scope>
</reference>
<reference key="3">
    <citation type="journal article" date="1999" name="Nature">
        <title>Sequence and analysis of chromosome 4 of the plant Arabidopsis thaliana.</title>
        <authorList>
            <person name="Mayer K.F.X."/>
            <person name="Schueller C."/>
            <person name="Wambutt R."/>
            <person name="Murphy G."/>
            <person name="Volckaert G."/>
            <person name="Pohl T."/>
            <person name="Duesterhoeft A."/>
            <person name="Stiekema W."/>
            <person name="Entian K.-D."/>
            <person name="Terryn N."/>
            <person name="Harris B."/>
            <person name="Ansorge W."/>
            <person name="Brandt P."/>
            <person name="Grivell L.A."/>
            <person name="Rieger M."/>
            <person name="Weichselgartner M."/>
            <person name="de Simone V."/>
            <person name="Obermaier B."/>
            <person name="Mache R."/>
            <person name="Mueller M."/>
            <person name="Kreis M."/>
            <person name="Delseny M."/>
            <person name="Puigdomenech P."/>
            <person name="Watson M."/>
            <person name="Schmidtheini T."/>
            <person name="Reichert B."/>
            <person name="Portetelle D."/>
            <person name="Perez-Alonso M."/>
            <person name="Boutry M."/>
            <person name="Bancroft I."/>
            <person name="Vos P."/>
            <person name="Hoheisel J."/>
            <person name="Zimmermann W."/>
            <person name="Wedler H."/>
            <person name="Ridley P."/>
            <person name="Langham S.-A."/>
            <person name="McCullagh B."/>
            <person name="Bilham L."/>
            <person name="Robben J."/>
            <person name="van der Schueren J."/>
            <person name="Grymonprez B."/>
            <person name="Chuang Y.-J."/>
            <person name="Vandenbussche F."/>
            <person name="Braeken M."/>
            <person name="Weltjens I."/>
            <person name="Voet M."/>
            <person name="Bastiaens I."/>
            <person name="Aert R."/>
            <person name="Defoor E."/>
            <person name="Weitzenegger T."/>
            <person name="Bothe G."/>
            <person name="Ramsperger U."/>
            <person name="Hilbert H."/>
            <person name="Braun M."/>
            <person name="Holzer E."/>
            <person name="Brandt A."/>
            <person name="Peters S."/>
            <person name="van Staveren M."/>
            <person name="Dirkse W."/>
            <person name="Mooijman P."/>
            <person name="Klein Lankhorst R."/>
            <person name="Rose M."/>
            <person name="Hauf J."/>
            <person name="Koetter P."/>
            <person name="Berneiser S."/>
            <person name="Hempel S."/>
            <person name="Feldpausch M."/>
            <person name="Lamberth S."/>
            <person name="Van den Daele H."/>
            <person name="De Keyser A."/>
            <person name="Buysshaert C."/>
            <person name="Gielen J."/>
            <person name="Villarroel R."/>
            <person name="De Clercq R."/>
            <person name="van Montagu M."/>
            <person name="Rogers J."/>
            <person name="Cronin A."/>
            <person name="Quail M.A."/>
            <person name="Bray-Allen S."/>
            <person name="Clark L."/>
            <person name="Doggett J."/>
            <person name="Hall S."/>
            <person name="Kay M."/>
            <person name="Lennard N."/>
            <person name="McLay K."/>
            <person name="Mayes R."/>
            <person name="Pettett A."/>
            <person name="Rajandream M.A."/>
            <person name="Lyne M."/>
            <person name="Benes V."/>
            <person name="Rechmann S."/>
            <person name="Borkova D."/>
            <person name="Bloecker H."/>
            <person name="Scharfe M."/>
            <person name="Grimm M."/>
            <person name="Loehnert T.-H."/>
            <person name="Dose S."/>
            <person name="de Haan M."/>
            <person name="Maarse A.C."/>
            <person name="Schaefer M."/>
            <person name="Mueller-Auer S."/>
            <person name="Gabel C."/>
            <person name="Fuchs M."/>
            <person name="Fartmann B."/>
            <person name="Granderath K."/>
            <person name="Dauner D."/>
            <person name="Herzl A."/>
            <person name="Neumann S."/>
            <person name="Argiriou A."/>
            <person name="Vitale D."/>
            <person name="Liguori R."/>
            <person name="Piravandi E."/>
            <person name="Massenet O."/>
            <person name="Quigley F."/>
            <person name="Clabauld G."/>
            <person name="Muendlein A."/>
            <person name="Felber R."/>
            <person name="Schnabl S."/>
            <person name="Hiller R."/>
            <person name="Schmidt W."/>
            <person name="Lecharny A."/>
            <person name="Aubourg S."/>
            <person name="Chefdor F."/>
            <person name="Cooke R."/>
            <person name="Berger C."/>
            <person name="Monfort A."/>
            <person name="Casacuberta E."/>
            <person name="Gibbons T."/>
            <person name="Weber N."/>
            <person name="Vandenbol M."/>
            <person name="Bargues M."/>
            <person name="Terol J."/>
            <person name="Torres A."/>
            <person name="Perez-Perez A."/>
            <person name="Purnelle B."/>
            <person name="Bent E."/>
            <person name="Johnson S."/>
            <person name="Tacon D."/>
            <person name="Jesse T."/>
            <person name="Heijnen L."/>
            <person name="Schwarz S."/>
            <person name="Scholler P."/>
            <person name="Heber S."/>
            <person name="Francs P."/>
            <person name="Bielke C."/>
            <person name="Frishman D."/>
            <person name="Haase D."/>
            <person name="Lemcke K."/>
            <person name="Mewes H.-W."/>
            <person name="Stocker S."/>
            <person name="Zaccaria P."/>
            <person name="Bevan M."/>
            <person name="Wilson R.K."/>
            <person name="de la Bastide M."/>
            <person name="Habermann K."/>
            <person name="Parnell L."/>
            <person name="Dedhia N."/>
            <person name="Gnoj L."/>
            <person name="Schutz K."/>
            <person name="Huang E."/>
            <person name="Spiegel L."/>
            <person name="Sekhon M."/>
            <person name="Murray J."/>
            <person name="Sheet P."/>
            <person name="Cordes M."/>
            <person name="Abu-Threideh J."/>
            <person name="Stoneking T."/>
            <person name="Kalicki J."/>
            <person name="Graves T."/>
            <person name="Harmon G."/>
            <person name="Edwards J."/>
            <person name="Latreille P."/>
            <person name="Courtney L."/>
            <person name="Cloud J."/>
            <person name="Abbott A."/>
            <person name="Scott K."/>
            <person name="Johnson D."/>
            <person name="Minx P."/>
            <person name="Bentley D."/>
            <person name="Fulton B."/>
            <person name="Miller N."/>
            <person name="Greco T."/>
            <person name="Kemp K."/>
            <person name="Kramer J."/>
            <person name="Fulton L."/>
            <person name="Mardis E."/>
            <person name="Dante M."/>
            <person name="Pepin K."/>
            <person name="Hillier L.W."/>
            <person name="Nelson J."/>
            <person name="Spieth J."/>
            <person name="Ryan E."/>
            <person name="Andrews S."/>
            <person name="Geisel C."/>
            <person name="Layman D."/>
            <person name="Du H."/>
            <person name="Ali J."/>
            <person name="Berghoff A."/>
            <person name="Jones K."/>
            <person name="Drone K."/>
            <person name="Cotton M."/>
            <person name="Joshu C."/>
            <person name="Antonoiu B."/>
            <person name="Zidanic M."/>
            <person name="Strong C."/>
            <person name="Sun H."/>
            <person name="Lamar B."/>
            <person name="Yordan C."/>
            <person name="Ma P."/>
            <person name="Zhong J."/>
            <person name="Preston R."/>
            <person name="Vil D."/>
            <person name="Shekher M."/>
            <person name="Matero A."/>
            <person name="Shah R."/>
            <person name="Swaby I.K."/>
            <person name="O'Shaughnessy A."/>
            <person name="Rodriguez M."/>
            <person name="Hoffman J."/>
            <person name="Till S."/>
            <person name="Granat S."/>
            <person name="Shohdy N."/>
            <person name="Hasegawa A."/>
            <person name="Hameed A."/>
            <person name="Lodhi M."/>
            <person name="Johnson A."/>
            <person name="Chen E."/>
            <person name="Marra M.A."/>
            <person name="Martienssen R."/>
            <person name="McCombie W.R."/>
        </authorList>
    </citation>
    <scope>NUCLEOTIDE SEQUENCE [LARGE SCALE GENOMIC DNA]</scope>
    <source>
        <strain>cv. Columbia</strain>
    </source>
</reference>
<reference key="4">
    <citation type="journal article" date="2017" name="Plant J.">
        <title>Araport11: a complete reannotation of the Arabidopsis thaliana reference genome.</title>
        <authorList>
            <person name="Cheng C.Y."/>
            <person name="Krishnakumar V."/>
            <person name="Chan A.P."/>
            <person name="Thibaud-Nissen F."/>
            <person name="Schobel S."/>
            <person name="Town C.D."/>
        </authorList>
    </citation>
    <scope>GENOME REANNOTATION</scope>
    <source>
        <strain>cv. Columbia</strain>
    </source>
</reference>
<reference key="5">
    <citation type="journal article" date="2003" name="Science">
        <title>Empirical analysis of transcriptional activity in the Arabidopsis genome.</title>
        <authorList>
            <person name="Yamada K."/>
            <person name="Lim J."/>
            <person name="Dale J.M."/>
            <person name="Chen H."/>
            <person name="Shinn P."/>
            <person name="Palm C.J."/>
            <person name="Southwick A.M."/>
            <person name="Wu H.C."/>
            <person name="Kim C.J."/>
            <person name="Nguyen M."/>
            <person name="Pham P.K."/>
            <person name="Cheuk R.F."/>
            <person name="Karlin-Newmann G."/>
            <person name="Liu S.X."/>
            <person name="Lam B."/>
            <person name="Sakano H."/>
            <person name="Wu T."/>
            <person name="Yu G."/>
            <person name="Miranda M."/>
            <person name="Quach H.L."/>
            <person name="Tripp M."/>
            <person name="Chang C.H."/>
            <person name="Lee J.M."/>
            <person name="Toriumi M.J."/>
            <person name="Chan M.M."/>
            <person name="Tang C.C."/>
            <person name="Onodera C.S."/>
            <person name="Deng J.M."/>
            <person name="Akiyama K."/>
            <person name="Ansari Y."/>
            <person name="Arakawa T."/>
            <person name="Banh J."/>
            <person name="Banno F."/>
            <person name="Bowser L."/>
            <person name="Brooks S.Y."/>
            <person name="Carninci P."/>
            <person name="Chao Q."/>
            <person name="Choy N."/>
            <person name="Enju A."/>
            <person name="Goldsmith A.D."/>
            <person name="Gurjal M."/>
            <person name="Hansen N.F."/>
            <person name="Hayashizaki Y."/>
            <person name="Johnson-Hopson C."/>
            <person name="Hsuan V.W."/>
            <person name="Iida K."/>
            <person name="Karnes M."/>
            <person name="Khan S."/>
            <person name="Koesema E."/>
            <person name="Ishida J."/>
            <person name="Jiang P.X."/>
            <person name="Jones T."/>
            <person name="Kawai J."/>
            <person name="Kamiya A."/>
            <person name="Meyers C."/>
            <person name="Nakajima M."/>
            <person name="Narusaka M."/>
            <person name="Seki M."/>
            <person name="Sakurai T."/>
            <person name="Satou M."/>
            <person name="Tamse R."/>
            <person name="Vaysberg M."/>
            <person name="Wallender E.K."/>
            <person name="Wong C."/>
            <person name="Yamamura Y."/>
            <person name="Yuan S."/>
            <person name="Shinozaki K."/>
            <person name="Davis R.W."/>
            <person name="Theologis A."/>
            <person name="Ecker J.R."/>
        </authorList>
    </citation>
    <scope>NUCLEOTIDE SEQUENCE [LARGE SCALE MRNA] (ISOFORM 1)</scope>
    <source>
        <strain>cv. Columbia</strain>
    </source>
</reference>
<reference key="6">
    <citation type="submission" date="2002-03" db="EMBL/GenBank/DDBJ databases">
        <title>Full-length cDNA from Arabidopsis thaliana.</title>
        <authorList>
            <person name="Brover V.V."/>
            <person name="Troukhan M.E."/>
            <person name="Alexandrov N.A."/>
            <person name="Lu Y.-P."/>
            <person name="Flavell R.B."/>
            <person name="Feldmann K.A."/>
        </authorList>
    </citation>
    <scope>NUCLEOTIDE SEQUENCE [LARGE SCALE MRNA] (ISOFORM 1)</scope>
</reference>
<reference key="7">
    <citation type="journal article" date="1992" name="Plant Cell Physiol.">
        <title>Molecular cloning and characterization of 9 cDNAs for genes that are responsive to desiccation in Arabidopsis thaliana: sequence analysis of one cDNA clone that encodes a putative transmembrane channel protein.</title>
        <authorList>
            <person name="Yamaguchi-Shinozaki K."/>
            <person name="Koizumi M."/>
            <person name="Urao S."/>
            <person name="Shinozaki K."/>
        </authorList>
    </citation>
    <scope>INDUCTION BY DROUGHT</scope>
</reference>
<reference key="8">
    <citation type="journal article" date="2003" name="DNA Res.">
        <title>Comprehensive analysis of NAC family genes in Oryza sativa and Arabidopsis thaliana.</title>
        <authorList>
            <person name="Ooka H."/>
            <person name="Satoh K."/>
            <person name="Doi K."/>
            <person name="Nagata T."/>
            <person name="Otomo Y."/>
            <person name="Murakami K."/>
            <person name="Matsubara K."/>
            <person name="Osato N."/>
            <person name="Kawai J."/>
            <person name="Carninci P."/>
            <person name="Hayashizaki Y."/>
            <person name="Suzuki K."/>
            <person name="Kojima K."/>
            <person name="Takahara Y."/>
            <person name="Yamamoto K."/>
            <person name="Kikuchi S."/>
        </authorList>
    </citation>
    <scope>GENE FAMILY</scope>
    <scope>NOMENCLATURE</scope>
</reference>
<reference key="9">
    <citation type="journal article" date="2004" name="Plant Cell">
        <title>Isolation and functional analysis of Arabidopsis stress-inducible NAC transcription factors that bind to a drought-responsive cis-element in the early responsive to dehydration stress 1 promoter.</title>
        <authorList>
            <person name="Tran L.-S.H."/>
            <person name="Nakashima K."/>
            <person name="Sakuma Y."/>
            <person name="Simpson S.D."/>
            <person name="Fujita Y."/>
            <person name="Maruyama K."/>
            <person name="Fujita M."/>
            <person name="Seki M."/>
            <person name="Shinozaki K."/>
            <person name="Yamaguchi-Shinozaki K."/>
        </authorList>
    </citation>
    <scope>FUNCTION</scope>
    <scope>TISSUE SPECIFICITY</scope>
    <scope>INDUCTION</scope>
</reference>
<reference key="10">
    <citation type="journal article" date="2006" name="Proc. Natl. Acad. Sci. U.S.A.">
        <title>Transcriptional and posttranscriptional regulation of transcription factor expression in Arabidopsis roots.</title>
        <authorList>
            <person name="Lee J.-Y."/>
            <person name="Colinas J."/>
            <person name="Wang J.Y."/>
            <person name="Mace D."/>
            <person name="Ohler U."/>
            <person name="Benfey P.N."/>
        </authorList>
    </citation>
    <scope>TISSUE SPECIFICITY</scope>
    <scope>SUBCELLULAR LOCATION</scope>
</reference>
<reference key="11">
    <citation type="journal article" date="2018" name="New Phytol.">
        <title>Transcription factor RD26 is a key regulator of metabolic reprogramming during dark-induced senescence.</title>
        <authorList>
            <person name="Kamranfar I."/>
            <person name="Xue G.-P."/>
            <person name="Tohge T."/>
            <person name="Sedaghatmehr M."/>
            <person name="Fernie A.R."/>
            <person name="Balazadeh S."/>
            <person name="Mueller-Roeber B."/>
        </authorList>
    </citation>
    <scope>FUNCTION</scope>
    <scope>DISRUPTION PHENOTYPE</scope>
    <scope>TISSUE SPECIFICITY</scope>
    <scope>SUBCELLULAR LOCATION</scope>
    <source>
        <strain>cv. Columbia</strain>
    </source>
</reference>
<accession>Q93VY3</accession>
<accession>Q8H141</accession>
<accession>Q94II4</accession>
<accession>Q9SZR8</accession>
<feature type="chain" id="PRO_0000376618" description="NAC domain-containing protein 72">
    <location>
        <begin position="1"/>
        <end position="297"/>
    </location>
</feature>
<feature type="domain" description="NAC" evidence="1">
    <location>
        <begin position="14"/>
        <end position="162"/>
    </location>
</feature>
<feature type="DNA-binding region" evidence="1">
    <location>
        <begin position="111"/>
        <end position="168"/>
    </location>
</feature>
<feature type="region of interest" description="Disordered" evidence="2">
    <location>
        <begin position="168"/>
        <end position="195"/>
    </location>
</feature>
<feature type="region of interest" description="Disordered" evidence="2">
    <location>
        <begin position="259"/>
        <end position="278"/>
    </location>
</feature>
<feature type="compositionally biased region" description="Polar residues" evidence="2">
    <location>
        <begin position="266"/>
        <end position="277"/>
    </location>
</feature>
<feature type="splice variant" id="VSP_037405" description="In isoform 2." evidence="9">
    <location>
        <begin position="1"/>
        <end position="69"/>
    </location>
</feature>
<feature type="splice variant" id="VSP_037406" description="In isoform 2." evidence="9">
    <original>WYFFSPRDRKYPNG</original>
    <variation>MVFLKPKRSEISER</variation>
    <location>
        <begin position="70"/>
        <end position="83"/>
    </location>
</feature>
<feature type="sequence conflict" description="In Ref. 1; BAB63913." evidence="10" ref="1">
    <original>T</original>
    <variation>R</variation>
    <location>
        <position position="98"/>
    </location>
</feature>
<feature type="sequence conflict" description="In Ref. 5; AAN31929." evidence="10" ref="5">
    <original>D</original>
    <variation>G</variation>
    <location>
        <position position="152"/>
    </location>
</feature>
<feature type="sequence conflict" description="In Ref. 1; BAB63913." evidence="10" ref="1">
    <original>I</original>
    <variation>V</variation>
    <location>
        <position position="220"/>
    </location>
</feature>
<sequence>MGVREKDPLAQLSLPPGFRFYPTDEELLVQYLCRKVAGYHFSLQVIGDIDLYKFDPWDLPSKALFGEKEWYFFSPRDRKYPNGSRPNRVAGSGYWKATGTDKIITADGRRVGIKKALVFYAGKAPKGTKTNWIMHEYRLIEHSRSHGSSKLDDWVLCRIYKKTSGSQRQAVTPVQACREEHSTNGSSSSSSSQLDDVLDSFPEIKDQSFNLPRMNSLRTILNGNFDWASLAGLNPIPELAPTNGLPSYGGYDAFRAAEGEAESGHVNRQQNSSGLTQSFGYSSSGFGVSGQTFEFRQ</sequence>
<protein>
    <recommendedName>
        <fullName evidence="7">NAC domain-containing protein 72</fullName>
        <shortName evidence="7">ANAC072</shortName>
    </recommendedName>
    <alternativeName>
        <fullName evidence="8">Protein RESPONSIVE TO DESICCATION 26</fullName>
    </alternativeName>
</protein>
<evidence type="ECO:0000255" key="1">
    <source>
        <dbReference type="PROSITE-ProRule" id="PRU00353"/>
    </source>
</evidence>
<evidence type="ECO:0000256" key="2">
    <source>
        <dbReference type="SAM" id="MobiDB-lite"/>
    </source>
</evidence>
<evidence type="ECO:0000269" key="3">
    <source>
    </source>
</evidence>
<evidence type="ECO:0000269" key="4">
    <source>
    </source>
</evidence>
<evidence type="ECO:0000269" key="5">
    <source>
    </source>
</evidence>
<evidence type="ECO:0000269" key="6">
    <source ref="7"/>
</evidence>
<evidence type="ECO:0000303" key="7">
    <source>
    </source>
</evidence>
<evidence type="ECO:0000303" key="8">
    <source>
    </source>
</evidence>
<evidence type="ECO:0000303" key="9">
    <source ref="1"/>
</evidence>
<evidence type="ECO:0000305" key="10"/>
<evidence type="ECO:0000312" key="11">
    <source>
        <dbReference type="Araport" id="AT4G27410"/>
    </source>
</evidence>
<evidence type="ECO:0000312" key="12">
    <source>
        <dbReference type="EMBL" id="CAB43873.1"/>
    </source>
</evidence>
<comment type="function">
    <text evidence="3 5">Transcription factors that bind specifically to the 5'-CATGTG-3' motif and with bipartite regions with 5'-CGTr-3' and 5'-YACG-3' as cores (PubMed:15319476, PubMed:29659022). Involved in the regulation of metabolic reprogramming during senescence by promoting the chloroplast protein degradation and the catabolism of lysine, phytol and free fatty acids via the induction of CV, LKR/SDH and PES1 expression (PubMed:29659022). Also triggers the degradation of starch and the accumulation of mono- and disaccharides during senescence by enhancing the expression of AMY1, SFP1 and SWEET15 (PubMed:29659022).</text>
</comment>
<comment type="subcellular location">
    <subcellularLocation>
        <location evidence="1 4 5">Nucleus</location>
    </subcellularLocation>
</comment>
<comment type="alternative products">
    <event type="alternative splicing"/>
    <isoform>
        <id>Q93VY3-1</id>
        <name>1</name>
        <sequence type="displayed"/>
    </isoform>
    <isoform>
        <id>Q93VY3-2</id>
        <name>2</name>
        <sequence type="described" ref="VSP_037405 VSP_037406"/>
    </isoform>
</comment>
<comment type="tissue specificity">
    <text evidence="3 4">Expressed in leaves and in root pericycle and epidermis.</text>
</comment>
<comment type="developmental stage">
    <text evidence="5">Accumulates during senescence.</text>
</comment>
<comment type="induction">
    <text evidence="3 6">Strongly induced by drought, high salinity and abscisic acid (ABA). Slightly up-regulated by cold treatment. Not induced by jasmonic acid.</text>
</comment>
<comment type="domain">
    <text>The NAC domain includes a DNA-binding domain and a dimerization domain.</text>
</comment>
<comment type="disruption phenotype">
    <text evidence="5">Delayed senescence (PubMed:29659022). Reduced expression of genes involved in the degradation of starch and the accumulation of mono- and disaccharides (e.g. AMY1, SFP1 and SWEET15) as well as of genes implicated in chloroplast protein degradation and in the catabolism of lysine, phytol and free fatty acids (e.g. CV, LKR/SDH and PES1) (PubMed:29659022).</text>
</comment>
<comment type="sequence caution" evidence="10">
    <conflict type="erroneous gene model prediction">
        <sequence resource="EMBL-CDS" id="CAB43873"/>
    </conflict>
</comment>
<comment type="sequence caution" evidence="10">
    <conflict type="erroneous gene model prediction">
        <sequence resource="EMBL-CDS" id="CAB81391"/>
    </conflict>
</comment>
<name>NAC72_ARATH</name>
<keyword id="KW-0025">Alternative splicing</keyword>
<keyword id="KW-0238">DNA-binding</keyword>
<keyword id="KW-0539">Nucleus</keyword>
<keyword id="KW-1185">Reference proteome</keyword>
<keyword id="KW-0804">Transcription</keyword>
<keyword id="KW-0805">Transcription regulation</keyword>